<comment type="function">
    <text evidence="1">Involved in the post-transcriptional modification of the uridine at the wobble position (U34) of tRNA(Lys), tRNA(Glu) and tRNA(Gln). Catalyzes the conversion of 2-thiouridine (S2U-RNA) to 2-selenouridine (Se2U-RNA). Acts in a two-step process involving geranylation of 2-thiouridine (S2U) to S-geranyl-2-thiouridine (geS2U) and subsequent selenation of the latter derivative to 2-selenouridine (Se2U) in the tRNA chain.</text>
</comment>
<comment type="catalytic activity">
    <reaction evidence="1">
        <text>5-methylaminomethyl-2-thiouridine(34) in tRNA + selenophosphate + (2E)-geranyl diphosphate + H2O + H(+) = 5-methylaminomethyl-2-selenouridine(34) in tRNA + (2E)-thiogeraniol + phosphate + diphosphate</text>
        <dbReference type="Rhea" id="RHEA:42716"/>
        <dbReference type="Rhea" id="RHEA-COMP:10195"/>
        <dbReference type="Rhea" id="RHEA-COMP:10196"/>
        <dbReference type="ChEBI" id="CHEBI:15377"/>
        <dbReference type="ChEBI" id="CHEBI:15378"/>
        <dbReference type="ChEBI" id="CHEBI:16144"/>
        <dbReference type="ChEBI" id="CHEBI:33019"/>
        <dbReference type="ChEBI" id="CHEBI:43474"/>
        <dbReference type="ChEBI" id="CHEBI:58057"/>
        <dbReference type="ChEBI" id="CHEBI:74455"/>
        <dbReference type="ChEBI" id="CHEBI:82743"/>
        <dbReference type="ChEBI" id="CHEBI:143703"/>
        <dbReference type="EC" id="2.9.1.3"/>
    </reaction>
    <physiologicalReaction direction="left-to-right" evidence="1">
        <dbReference type="Rhea" id="RHEA:42717"/>
    </physiologicalReaction>
</comment>
<comment type="catalytic activity">
    <reaction evidence="1">
        <text>5-methylaminomethyl-2-thiouridine(34) in tRNA + (2E)-geranyl diphosphate = 5-methylaminomethyl-S-(2E)-geranyl-thiouridine(34) in tRNA + diphosphate</text>
        <dbReference type="Rhea" id="RHEA:14085"/>
        <dbReference type="Rhea" id="RHEA-COMP:10195"/>
        <dbReference type="Rhea" id="RHEA-COMP:14654"/>
        <dbReference type="ChEBI" id="CHEBI:33019"/>
        <dbReference type="ChEBI" id="CHEBI:58057"/>
        <dbReference type="ChEBI" id="CHEBI:74455"/>
        <dbReference type="ChEBI" id="CHEBI:140632"/>
    </reaction>
    <physiologicalReaction direction="left-to-right" evidence="1">
        <dbReference type="Rhea" id="RHEA:14086"/>
    </physiologicalReaction>
</comment>
<comment type="catalytic activity">
    <reaction evidence="1">
        <text>5-methylaminomethyl-S-(2E)-geranyl-thiouridine(34) in tRNA + selenophosphate + H(+) = 5-methylaminomethyl-2-(Se-phospho)selenouridine(34) in tRNA + (2E)-thiogeraniol</text>
        <dbReference type="Rhea" id="RHEA:60172"/>
        <dbReference type="Rhea" id="RHEA-COMP:14654"/>
        <dbReference type="Rhea" id="RHEA-COMP:15523"/>
        <dbReference type="ChEBI" id="CHEBI:15378"/>
        <dbReference type="ChEBI" id="CHEBI:16144"/>
        <dbReference type="ChEBI" id="CHEBI:140632"/>
        <dbReference type="ChEBI" id="CHEBI:143702"/>
        <dbReference type="ChEBI" id="CHEBI:143703"/>
    </reaction>
    <physiologicalReaction direction="left-to-right" evidence="1">
        <dbReference type="Rhea" id="RHEA:60173"/>
    </physiologicalReaction>
</comment>
<comment type="catalytic activity">
    <reaction evidence="1">
        <text>5-methylaminomethyl-2-(Se-phospho)selenouridine(34) in tRNA + H2O = 5-methylaminomethyl-2-selenouridine(34) in tRNA + phosphate</text>
        <dbReference type="Rhea" id="RHEA:60176"/>
        <dbReference type="Rhea" id="RHEA-COMP:10196"/>
        <dbReference type="Rhea" id="RHEA-COMP:15523"/>
        <dbReference type="ChEBI" id="CHEBI:15377"/>
        <dbReference type="ChEBI" id="CHEBI:43474"/>
        <dbReference type="ChEBI" id="CHEBI:82743"/>
        <dbReference type="ChEBI" id="CHEBI:143702"/>
    </reaction>
    <physiologicalReaction direction="left-to-right" evidence="1">
        <dbReference type="Rhea" id="RHEA:60177"/>
    </physiologicalReaction>
</comment>
<comment type="subunit">
    <text evidence="1">Monomer.</text>
</comment>
<comment type="similarity">
    <text evidence="1">Belongs to the SelU family.</text>
</comment>
<sequence length="364" mass="41117">MQERHTEQDYRALLIADTPIIDVRAPIEFEQGAMPAAINLPLMNNDERAAVGTCYKQQGSDAALALGHKLVAGEIRQQRMDAWRAACLQNPQGILCCARGGQRSHIVQSWLHAAGIDYPLVEGGYKALRQTTIQATIELAQKPIVLIGGCTGCGKTLLVQQQPNGVDLEGLARHRGSAFGRTLQPQLSQASFENLLAAEMLKTDARQNLRLWVLEDESRMIGSNHLPECLRERMTQAAIAVVEDPFEIRLERLNEEYFLRMHHDFTHAYGDEQGWQEYCEYLHHGLSAIKRRLGLQRYNELAARLDAALTTQLATGSTDGHLAWLVPLLKEYYDPMYRYQLEKKAEKVVFRGEWAEVAEWVKAR</sequence>
<name>SELU_ECO8A</name>
<protein>
    <recommendedName>
        <fullName evidence="1">tRNA 2-selenouridine synthase</fullName>
        <ecNumber evidence="1">2.9.1.3</ecNumber>
    </recommendedName>
</protein>
<organism>
    <name type="scientific">Escherichia coli O8 (strain IAI1)</name>
    <dbReference type="NCBI Taxonomy" id="585034"/>
    <lineage>
        <taxon>Bacteria</taxon>
        <taxon>Pseudomonadati</taxon>
        <taxon>Pseudomonadota</taxon>
        <taxon>Gammaproteobacteria</taxon>
        <taxon>Enterobacterales</taxon>
        <taxon>Enterobacteriaceae</taxon>
        <taxon>Escherichia</taxon>
    </lineage>
</organism>
<keyword id="KW-0711">Selenium</keyword>
<keyword id="KW-0808">Transferase</keyword>
<accession>B7M4K7</accession>
<gene>
    <name evidence="1" type="primary">selU</name>
    <name type="ordered locus">ECIAI1_0506</name>
</gene>
<feature type="chain" id="PRO_1000186070" description="tRNA 2-selenouridine synthase">
    <location>
        <begin position="1"/>
        <end position="364"/>
    </location>
</feature>
<feature type="domain" description="Rhodanese" evidence="1">
    <location>
        <begin position="14"/>
        <end position="137"/>
    </location>
</feature>
<feature type="active site" description="S-selanylcysteine intermediate" evidence="1">
    <location>
        <position position="97"/>
    </location>
</feature>
<dbReference type="EC" id="2.9.1.3" evidence="1"/>
<dbReference type="EMBL" id="CU928160">
    <property type="protein sequence ID" value="CAQ97378.1"/>
    <property type="molecule type" value="Genomic_DNA"/>
</dbReference>
<dbReference type="SMR" id="B7M4K7"/>
<dbReference type="KEGG" id="ecr:ECIAI1_0506"/>
<dbReference type="HOGENOM" id="CLU_043456_1_0_6"/>
<dbReference type="GO" id="GO:0016765">
    <property type="term" value="F:transferase activity, transferring alkyl or aryl (other than methyl) groups"/>
    <property type="evidence" value="ECO:0007669"/>
    <property type="project" value="UniProtKB-UniRule"/>
</dbReference>
<dbReference type="GO" id="GO:0043828">
    <property type="term" value="F:tRNA 2-selenouridine synthase activity"/>
    <property type="evidence" value="ECO:0007669"/>
    <property type="project" value="UniProtKB-EC"/>
</dbReference>
<dbReference type="GO" id="GO:0002098">
    <property type="term" value="P:tRNA wobble uridine modification"/>
    <property type="evidence" value="ECO:0007669"/>
    <property type="project" value="UniProtKB-UniRule"/>
</dbReference>
<dbReference type="CDD" id="cd01520">
    <property type="entry name" value="RHOD_YbbB"/>
    <property type="match status" value="1"/>
</dbReference>
<dbReference type="FunFam" id="3.40.250.10:FF:000009">
    <property type="entry name" value="tRNA 2-selenouridine/geranyl-2-thiouridine synthase"/>
    <property type="match status" value="1"/>
</dbReference>
<dbReference type="Gene3D" id="3.40.250.10">
    <property type="entry name" value="Rhodanese-like domain"/>
    <property type="match status" value="1"/>
</dbReference>
<dbReference type="HAMAP" id="MF_01622">
    <property type="entry name" value="tRNA_sel_U_synth"/>
    <property type="match status" value="1"/>
</dbReference>
<dbReference type="InterPro" id="IPR001763">
    <property type="entry name" value="Rhodanese-like_dom"/>
</dbReference>
<dbReference type="InterPro" id="IPR036873">
    <property type="entry name" value="Rhodanese-like_dom_sf"/>
</dbReference>
<dbReference type="InterPro" id="IPR017582">
    <property type="entry name" value="SelU"/>
</dbReference>
<dbReference type="NCBIfam" id="NF008749">
    <property type="entry name" value="PRK11784.1-1"/>
    <property type="match status" value="1"/>
</dbReference>
<dbReference type="NCBIfam" id="NF008751">
    <property type="entry name" value="PRK11784.1-3"/>
    <property type="match status" value="1"/>
</dbReference>
<dbReference type="NCBIfam" id="TIGR03167">
    <property type="entry name" value="tRNA_sel_U_synt"/>
    <property type="match status" value="1"/>
</dbReference>
<dbReference type="PANTHER" id="PTHR30401">
    <property type="entry name" value="TRNA 2-SELENOURIDINE SYNTHASE"/>
    <property type="match status" value="1"/>
</dbReference>
<dbReference type="PANTHER" id="PTHR30401:SF0">
    <property type="entry name" value="TRNA 2-SELENOURIDINE SYNTHASE"/>
    <property type="match status" value="1"/>
</dbReference>
<dbReference type="Pfam" id="PF00581">
    <property type="entry name" value="Rhodanese"/>
    <property type="match status" value="1"/>
</dbReference>
<dbReference type="SMART" id="SM00450">
    <property type="entry name" value="RHOD"/>
    <property type="match status" value="1"/>
</dbReference>
<dbReference type="SUPFAM" id="SSF52821">
    <property type="entry name" value="Rhodanese/Cell cycle control phosphatase"/>
    <property type="match status" value="1"/>
</dbReference>
<dbReference type="PROSITE" id="PS50206">
    <property type="entry name" value="RHODANESE_3"/>
    <property type="match status" value="1"/>
</dbReference>
<evidence type="ECO:0000255" key="1">
    <source>
        <dbReference type="HAMAP-Rule" id="MF_01622"/>
    </source>
</evidence>
<proteinExistence type="inferred from homology"/>
<reference key="1">
    <citation type="journal article" date="2009" name="PLoS Genet.">
        <title>Organised genome dynamics in the Escherichia coli species results in highly diverse adaptive paths.</title>
        <authorList>
            <person name="Touchon M."/>
            <person name="Hoede C."/>
            <person name="Tenaillon O."/>
            <person name="Barbe V."/>
            <person name="Baeriswyl S."/>
            <person name="Bidet P."/>
            <person name="Bingen E."/>
            <person name="Bonacorsi S."/>
            <person name="Bouchier C."/>
            <person name="Bouvet O."/>
            <person name="Calteau A."/>
            <person name="Chiapello H."/>
            <person name="Clermont O."/>
            <person name="Cruveiller S."/>
            <person name="Danchin A."/>
            <person name="Diard M."/>
            <person name="Dossat C."/>
            <person name="Karoui M.E."/>
            <person name="Frapy E."/>
            <person name="Garry L."/>
            <person name="Ghigo J.M."/>
            <person name="Gilles A.M."/>
            <person name="Johnson J."/>
            <person name="Le Bouguenec C."/>
            <person name="Lescat M."/>
            <person name="Mangenot S."/>
            <person name="Martinez-Jehanne V."/>
            <person name="Matic I."/>
            <person name="Nassif X."/>
            <person name="Oztas S."/>
            <person name="Petit M.A."/>
            <person name="Pichon C."/>
            <person name="Rouy Z."/>
            <person name="Ruf C.S."/>
            <person name="Schneider D."/>
            <person name="Tourret J."/>
            <person name="Vacherie B."/>
            <person name="Vallenet D."/>
            <person name="Medigue C."/>
            <person name="Rocha E.P.C."/>
            <person name="Denamur E."/>
        </authorList>
    </citation>
    <scope>NUCLEOTIDE SEQUENCE [LARGE SCALE GENOMIC DNA]</scope>
    <source>
        <strain>IAI1</strain>
    </source>
</reference>